<protein>
    <recommendedName>
        <fullName evidence="8">FCS-Like Zinc finger 8</fullName>
    </recommendedName>
</protein>
<accession>Q8L471</accession>
<accession>Q9LJ91</accession>
<comment type="function">
    <text evidence="3">May act as an adapter to facilitate the interaction of SnRK1 complex with effector proteins, conferring tissue- and stimulus-type specific differences in the SnRK1 regulation pathway.</text>
</comment>
<comment type="subunit">
    <text evidence="5 6">Interacts with KIN10 and KIN11 via its FLZ-type zinc finger domain (PubMed:29945970). Interacts with KINB1, KINB2, KINB3 and SNF4 via its N-terminal part (PubMed:29945970). Interacts with HB21/ZHD3 (Ref.8).</text>
</comment>
<comment type="induction">
    <text evidence="4">Down-regulated in response to mild as well as prolonged energy depletion (PubMed:26442059). Up-regulated by glucose and sucrose (PubMed:26442059).</text>
</comment>
<comment type="similarity">
    <text evidence="9">Belongs to the FLZ family.</text>
</comment>
<comment type="sequence caution" evidence="9">
    <conflict type="erroneous initiation">
        <sequence resource="EMBL-CDS" id="BAB01470"/>
    </conflict>
    <text>Truncated N-terminus.</text>
</comment>
<gene>
    <name evidence="8" type="primary">FLZ8</name>
    <name evidence="7" type="synonym">DUF581-10</name>
    <name evidence="10" type="ordered locus">At3g22550</name>
    <name evidence="11" type="ORF">F16J14.11</name>
</gene>
<keyword id="KW-0479">Metal-binding</keyword>
<keyword id="KW-1185">Reference proteome</keyword>
<keyword id="KW-0862">Zinc</keyword>
<keyword id="KW-0863">Zinc-finger</keyword>
<dbReference type="EMBL" id="AP000731">
    <property type="protein sequence ID" value="BAB01470.1"/>
    <property type="status" value="ALT_INIT"/>
    <property type="molecule type" value="Genomic_DNA"/>
</dbReference>
<dbReference type="EMBL" id="CP002686">
    <property type="protein sequence ID" value="AEE76652.1"/>
    <property type="molecule type" value="Genomic_DNA"/>
</dbReference>
<dbReference type="EMBL" id="AY099714">
    <property type="protein sequence ID" value="AAM20565.1"/>
    <property type="molecule type" value="mRNA"/>
</dbReference>
<dbReference type="EMBL" id="AY128875">
    <property type="protein sequence ID" value="AAM91275.1"/>
    <property type="molecule type" value="mRNA"/>
</dbReference>
<dbReference type="RefSeq" id="NP_188894.2">
    <property type="nucleotide sequence ID" value="NM_113154.4"/>
</dbReference>
<dbReference type="FunCoup" id="Q8L471">
    <property type="interactions" value="155"/>
</dbReference>
<dbReference type="IntAct" id="Q8L471">
    <property type="interactions" value="9"/>
</dbReference>
<dbReference type="STRING" id="3702.Q8L471"/>
<dbReference type="iPTMnet" id="Q8L471"/>
<dbReference type="PaxDb" id="3702-AT3G22550.1"/>
<dbReference type="ProteomicsDB" id="230437"/>
<dbReference type="EnsemblPlants" id="AT3G22550.1">
    <property type="protein sequence ID" value="AT3G22550.1"/>
    <property type="gene ID" value="AT3G22550"/>
</dbReference>
<dbReference type="GeneID" id="821826"/>
<dbReference type="Gramene" id="AT3G22550.1">
    <property type="protein sequence ID" value="AT3G22550.1"/>
    <property type="gene ID" value="AT3G22550"/>
</dbReference>
<dbReference type="KEGG" id="ath:AT3G22550"/>
<dbReference type="Araport" id="AT3G22550"/>
<dbReference type="TAIR" id="AT3G22550"/>
<dbReference type="eggNOG" id="ENOG502QS8T">
    <property type="taxonomic scope" value="Eukaryota"/>
</dbReference>
<dbReference type="HOGENOM" id="CLU_052134_2_1_1"/>
<dbReference type="InParanoid" id="Q8L471"/>
<dbReference type="OMA" id="FWSESNT"/>
<dbReference type="PhylomeDB" id="Q8L471"/>
<dbReference type="PRO" id="PR:Q8L471"/>
<dbReference type="Proteomes" id="UP000006548">
    <property type="component" value="Chromosome 3"/>
</dbReference>
<dbReference type="ExpressionAtlas" id="Q8L471">
    <property type="expression patterns" value="baseline and differential"/>
</dbReference>
<dbReference type="GO" id="GO:0008270">
    <property type="term" value="F:zinc ion binding"/>
    <property type="evidence" value="ECO:0007669"/>
    <property type="project" value="UniProtKB-KW"/>
</dbReference>
<dbReference type="GO" id="GO:0071456">
    <property type="term" value="P:cellular response to hypoxia"/>
    <property type="evidence" value="ECO:0007007"/>
    <property type="project" value="TAIR"/>
</dbReference>
<dbReference type="GO" id="GO:0009749">
    <property type="term" value="P:response to glucose"/>
    <property type="evidence" value="ECO:0000270"/>
    <property type="project" value="UniProtKB"/>
</dbReference>
<dbReference type="GO" id="GO:0042594">
    <property type="term" value="P:response to starvation"/>
    <property type="evidence" value="ECO:0000270"/>
    <property type="project" value="UniProtKB"/>
</dbReference>
<dbReference type="GO" id="GO:0009744">
    <property type="term" value="P:response to sucrose"/>
    <property type="evidence" value="ECO:0000270"/>
    <property type="project" value="UniProtKB"/>
</dbReference>
<dbReference type="InterPro" id="IPR044593">
    <property type="entry name" value="FLZ8/MARD1"/>
</dbReference>
<dbReference type="InterPro" id="IPR007650">
    <property type="entry name" value="Zf-FLZ_dom"/>
</dbReference>
<dbReference type="PANTHER" id="PTHR46443">
    <property type="entry name" value="FCS-LIKE ZINC FINGER 8"/>
    <property type="match status" value="1"/>
</dbReference>
<dbReference type="PANTHER" id="PTHR46443:SF21">
    <property type="entry name" value="FCS-LIKE ZINC FINGER 8"/>
    <property type="match status" value="1"/>
</dbReference>
<dbReference type="Pfam" id="PF04570">
    <property type="entry name" value="zf-FLZ"/>
    <property type="match status" value="1"/>
</dbReference>
<dbReference type="PROSITE" id="PS51795">
    <property type="entry name" value="ZF_FLZ"/>
    <property type="match status" value="1"/>
</dbReference>
<evidence type="ECO:0000255" key="1">
    <source>
        <dbReference type="PROSITE-ProRule" id="PRU01131"/>
    </source>
</evidence>
<evidence type="ECO:0000256" key="2">
    <source>
        <dbReference type="SAM" id="MobiDB-lite"/>
    </source>
</evidence>
<evidence type="ECO:0000269" key="3">
    <source>
    </source>
</evidence>
<evidence type="ECO:0000269" key="4">
    <source>
    </source>
</evidence>
<evidence type="ECO:0000269" key="5">
    <source>
    </source>
</evidence>
<evidence type="ECO:0000269" key="6">
    <source ref="8"/>
</evidence>
<evidence type="ECO:0000303" key="7">
    <source>
    </source>
</evidence>
<evidence type="ECO:0000303" key="8">
    <source>
    </source>
</evidence>
<evidence type="ECO:0000305" key="9"/>
<evidence type="ECO:0000312" key="10">
    <source>
        <dbReference type="Araport" id="AT3G22550"/>
    </source>
</evidence>
<evidence type="ECO:0000312" key="11">
    <source>
        <dbReference type="EMBL" id="BAB01470.1"/>
    </source>
</evidence>
<name>FLZ8_ARATH</name>
<organism>
    <name type="scientific">Arabidopsis thaliana</name>
    <name type="common">Mouse-ear cress</name>
    <dbReference type="NCBI Taxonomy" id="3702"/>
    <lineage>
        <taxon>Eukaryota</taxon>
        <taxon>Viridiplantae</taxon>
        <taxon>Streptophyta</taxon>
        <taxon>Embryophyta</taxon>
        <taxon>Tracheophyta</taxon>
        <taxon>Spermatophyta</taxon>
        <taxon>Magnoliopsida</taxon>
        <taxon>eudicotyledons</taxon>
        <taxon>Gunneridae</taxon>
        <taxon>Pentapetalae</taxon>
        <taxon>rosids</taxon>
        <taxon>malvids</taxon>
        <taxon>Brassicales</taxon>
        <taxon>Brassicaceae</taxon>
        <taxon>Camelineae</taxon>
        <taxon>Arabidopsis</taxon>
    </lineage>
</organism>
<reference key="1">
    <citation type="journal article" date="2000" name="DNA Res.">
        <title>Structural analysis of Arabidopsis thaliana chromosome 3. II. Sequence features of the 4,251,695 bp regions covered by 90 P1, TAC and BAC clones.</title>
        <authorList>
            <person name="Kaneko T."/>
            <person name="Katoh T."/>
            <person name="Sato S."/>
            <person name="Nakamura Y."/>
            <person name="Asamizu E."/>
            <person name="Tabata S."/>
        </authorList>
    </citation>
    <scope>NUCLEOTIDE SEQUENCE [LARGE SCALE GENOMIC DNA]</scope>
    <source>
        <strain>cv. Columbia</strain>
    </source>
</reference>
<reference key="2">
    <citation type="journal article" date="2017" name="Plant J.">
        <title>Araport11: a complete reannotation of the Arabidopsis thaliana reference genome.</title>
        <authorList>
            <person name="Cheng C.Y."/>
            <person name="Krishnakumar V."/>
            <person name="Chan A.P."/>
            <person name="Thibaud-Nissen F."/>
            <person name="Schobel S."/>
            <person name="Town C.D."/>
        </authorList>
    </citation>
    <scope>GENOME REANNOTATION</scope>
    <source>
        <strain>cv. Columbia</strain>
    </source>
</reference>
<reference key="3">
    <citation type="journal article" date="2003" name="Science">
        <title>Empirical analysis of transcriptional activity in the Arabidopsis genome.</title>
        <authorList>
            <person name="Yamada K."/>
            <person name="Lim J."/>
            <person name="Dale J.M."/>
            <person name="Chen H."/>
            <person name="Shinn P."/>
            <person name="Palm C.J."/>
            <person name="Southwick A.M."/>
            <person name="Wu H.C."/>
            <person name="Kim C.J."/>
            <person name="Nguyen M."/>
            <person name="Pham P.K."/>
            <person name="Cheuk R.F."/>
            <person name="Karlin-Newmann G."/>
            <person name="Liu S.X."/>
            <person name="Lam B."/>
            <person name="Sakano H."/>
            <person name="Wu T."/>
            <person name="Yu G."/>
            <person name="Miranda M."/>
            <person name="Quach H.L."/>
            <person name="Tripp M."/>
            <person name="Chang C.H."/>
            <person name="Lee J.M."/>
            <person name="Toriumi M.J."/>
            <person name="Chan M.M."/>
            <person name="Tang C.C."/>
            <person name="Onodera C.S."/>
            <person name="Deng J.M."/>
            <person name="Akiyama K."/>
            <person name="Ansari Y."/>
            <person name="Arakawa T."/>
            <person name="Banh J."/>
            <person name="Banno F."/>
            <person name="Bowser L."/>
            <person name="Brooks S.Y."/>
            <person name="Carninci P."/>
            <person name="Chao Q."/>
            <person name="Choy N."/>
            <person name="Enju A."/>
            <person name="Goldsmith A.D."/>
            <person name="Gurjal M."/>
            <person name="Hansen N.F."/>
            <person name="Hayashizaki Y."/>
            <person name="Johnson-Hopson C."/>
            <person name="Hsuan V.W."/>
            <person name="Iida K."/>
            <person name="Karnes M."/>
            <person name="Khan S."/>
            <person name="Koesema E."/>
            <person name="Ishida J."/>
            <person name="Jiang P.X."/>
            <person name="Jones T."/>
            <person name="Kawai J."/>
            <person name="Kamiya A."/>
            <person name="Meyers C."/>
            <person name="Nakajima M."/>
            <person name="Narusaka M."/>
            <person name="Seki M."/>
            <person name="Sakurai T."/>
            <person name="Satou M."/>
            <person name="Tamse R."/>
            <person name="Vaysberg M."/>
            <person name="Wallender E.K."/>
            <person name="Wong C."/>
            <person name="Yamamura Y."/>
            <person name="Yuan S."/>
            <person name="Shinozaki K."/>
            <person name="Davis R.W."/>
            <person name="Theologis A."/>
            <person name="Ecker J.R."/>
        </authorList>
    </citation>
    <scope>NUCLEOTIDE SEQUENCE [LARGE SCALE MRNA]</scope>
    <source>
        <strain>cv. Columbia</strain>
    </source>
</reference>
<reference key="4">
    <citation type="journal article" date="2014" name="Front. Plant Sci.">
        <title>The complex becomes more complex: protein-protein interactions of SnRK1 with DUF581 family proteins provide a framework for cell- and stimulus type-specific SnRK1 signaling in plants.</title>
        <authorList>
            <person name="Nietzsche M."/>
            <person name="Schiessl I."/>
            <person name="Boernke F."/>
        </authorList>
    </citation>
    <scope>GENE FAMILY</scope>
    <scope>FUNCTION</scope>
</reference>
<reference key="5">
    <citation type="journal article" date="2014" name="Front. Plant Sci.">
        <title>Corrigendum: The complex becomes more complex: protein-protein interactions of SnRK1 with DUF581 family proteins provide a framework for cell- and stimulus type-specific SnRK1 signaling in plants.</title>
        <authorList>
            <person name="Boernke F."/>
        </authorList>
    </citation>
    <scope>ERRATUM OF PUBMED:24600465</scope>
</reference>
<reference key="6">
    <citation type="journal article" date="2014" name="PLoS ONE">
        <title>DUF581 is plant specific FCS-like zinc finger involved in protein-protein interaction.</title>
        <authorList>
            <person name="Jamsheer K M."/>
            <person name="Laxmi A."/>
        </authorList>
    </citation>
    <scope>GENE FAMILY</scope>
    <scope>NOMENCLATURE</scope>
</reference>
<reference key="7">
    <citation type="journal article" date="2015" name="Front. Plant Sci.">
        <title>Expression of Arabidopsis FCS-Like Zinc finger genes is differentially regulated by sugars, cellular energy level, and abiotic stress.</title>
        <authorList>
            <person name="Jamsheer K M."/>
            <person name="Laxmi A."/>
        </authorList>
    </citation>
    <scope>INDUCTION</scope>
</reference>
<reference key="8">
    <citation type="journal article" date="2016" name="Curr. Plant Biol.">
        <title>A protein-protein interaction network linking the energy-sensor kinase SnRK1 to multiple signaling pathways in Arabidopsis thaliana.</title>
        <authorList>
            <person name="Nietzsche M."/>
            <person name="Landgraf R."/>
            <person name="Tohge T."/>
            <person name="Boernke F."/>
        </authorList>
    </citation>
    <scope>INTERACTION WITH HB21</scope>
</reference>
<reference key="9">
    <citation type="journal article" date="2018" name="J. Biol. Chem.">
        <title>The FCS-like zinc finger scaffold of the kinase SnRK1 is formed by the coordinated actions of the FLZ domain and intrinsically disordered regions.</title>
        <authorList>
            <person name="Jamsheer K M."/>
            <person name="Shukla B.N."/>
            <person name="Jindal S."/>
            <person name="Gopan N."/>
            <person name="Mannully C.T."/>
            <person name="Laxmi A."/>
        </authorList>
    </citation>
    <scope>INTERACTION WITH KIN10; KIN11; KINB1; KINB2; KINB3 AND SNF4</scope>
</reference>
<proteinExistence type="evidence at protein level"/>
<feature type="chain" id="PRO_0000445499" description="FCS-Like Zinc finger 8">
    <location>
        <begin position="1"/>
        <end position="267"/>
    </location>
</feature>
<feature type="zinc finger region" description="FLZ-type" evidence="1">
    <location>
        <begin position="221"/>
        <end position="265"/>
    </location>
</feature>
<feature type="region of interest" description="Disordered" evidence="2">
    <location>
        <begin position="1"/>
        <end position="29"/>
    </location>
</feature>
<feature type="region of interest" description="Disordered" evidence="2">
    <location>
        <begin position="124"/>
        <end position="156"/>
    </location>
</feature>
<feature type="compositionally biased region" description="Polar residues" evidence="2">
    <location>
        <begin position="15"/>
        <end position="28"/>
    </location>
</feature>
<feature type="compositionally biased region" description="Polar residues" evidence="2">
    <location>
        <begin position="126"/>
        <end position="141"/>
    </location>
</feature>
<sequence length="267" mass="29640">MLKKRSRSKQALMAETNQSQNQKQSKTTPFPRLFTAFSSFKSFTENDAVASPTSILDTKPFSVLKNPFGSDNPKTQEPETRLKLEPKRIGLAIVDSLIQDETPEPGPRSGTILFGSQLRIRVPDSPISSSDFGIKTRNSQPETKKPGSESGLGSPRIISGYFPASDMELSEDYTCVTCHGPNPRTIHIFDNCIVESQPGVVFFRSSDPVNESDSDYSPPDSFLSCCCNCKKSLGPRDDIFMYRGDRAFCSSECRSIEMMMSEENDTK</sequence>